<comment type="function">
    <text evidence="1">Non-essential, abundant cell division factor that is required for proper Z-ring formation. It is recruited early to the divisome by direct interaction with FtsZ, stimulating Z-ring assembly and thereby promoting cell division earlier in the cell cycle. Its recruitment to the Z-ring requires functional FtsA or ZipA.</text>
</comment>
<comment type="subunit">
    <text evidence="1">Homodimer. The ends of the coiled-coil dimer bind to each other, forming polymers. Interacts with FtsZ.</text>
</comment>
<comment type="subcellular location">
    <subcellularLocation>
        <location>Cytoplasm</location>
    </subcellularLocation>
    <text evidence="1">Localizes to the septum at mid-cell, in a FtsZ-like pattern.</text>
</comment>
<comment type="similarity">
    <text evidence="1">Belongs to the ZapB family.</text>
</comment>
<reference key="1">
    <citation type="journal article" date="2003" name="Genome Res.">
        <title>Comparative genome analysis of Vibrio vulnificus, a marine pathogen.</title>
        <authorList>
            <person name="Chen C.-Y."/>
            <person name="Wu K.-M."/>
            <person name="Chang Y.-C."/>
            <person name="Chang C.-H."/>
            <person name="Tsai H.-C."/>
            <person name="Liao T.-L."/>
            <person name="Liu Y.-M."/>
            <person name="Chen H.-J."/>
            <person name="Shen A.B.-T."/>
            <person name="Li J.-C."/>
            <person name="Su T.-L."/>
            <person name="Shao C.-P."/>
            <person name="Lee C.-T."/>
            <person name="Hor L.-I."/>
            <person name="Tsai S.-F."/>
        </authorList>
    </citation>
    <scope>NUCLEOTIDE SEQUENCE [LARGE SCALE GENOMIC DNA]</scope>
    <source>
        <strain>YJ016</strain>
    </source>
</reference>
<sequence>MSFEVLEKLEAKIQTAVDTIALLQMEVDELKEDKAKLETEANELRAQREQLEQKAQQTQQEHAQWQERIRALLGKMEDVE</sequence>
<keyword id="KW-0131">Cell cycle</keyword>
<keyword id="KW-0132">Cell division</keyword>
<keyword id="KW-0175">Coiled coil</keyword>
<keyword id="KW-0963">Cytoplasm</keyword>
<keyword id="KW-0717">Septation</keyword>
<organism>
    <name type="scientific">Vibrio vulnificus (strain YJ016)</name>
    <dbReference type="NCBI Taxonomy" id="196600"/>
    <lineage>
        <taxon>Bacteria</taxon>
        <taxon>Pseudomonadati</taxon>
        <taxon>Pseudomonadota</taxon>
        <taxon>Gammaproteobacteria</taxon>
        <taxon>Vibrionales</taxon>
        <taxon>Vibrionaceae</taxon>
        <taxon>Vibrio</taxon>
    </lineage>
</organism>
<accession>Q7MH53</accession>
<proteinExistence type="inferred from homology"/>
<gene>
    <name evidence="1" type="primary">zapB</name>
    <name type="ordered locus">VV3019</name>
</gene>
<name>ZAPB_VIBVY</name>
<dbReference type="EMBL" id="BA000037">
    <property type="protein sequence ID" value="BAC95783.1"/>
    <property type="molecule type" value="Genomic_DNA"/>
</dbReference>
<dbReference type="RefSeq" id="WP_011079328.1">
    <property type="nucleotide sequence ID" value="NC_005139.1"/>
</dbReference>
<dbReference type="SMR" id="Q7MH53"/>
<dbReference type="STRING" id="672.VV93_v1c27470"/>
<dbReference type="KEGG" id="vvy:VV3019"/>
<dbReference type="eggNOG" id="COG3074">
    <property type="taxonomic scope" value="Bacteria"/>
</dbReference>
<dbReference type="HOGENOM" id="CLU_171174_2_0_6"/>
<dbReference type="Proteomes" id="UP000002675">
    <property type="component" value="Chromosome I"/>
</dbReference>
<dbReference type="GO" id="GO:0005737">
    <property type="term" value="C:cytoplasm"/>
    <property type="evidence" value="ECO:0007669"/>
    <property type="project" value="UniProtKB-SubCell"/>
</dbReference>
<dbReference type="GO" id="GO:0000917">
    <property type="term" value="P:division septum assembly"/>
    <property type="evidence" value="ECO:0007669"/>
    <property type="project" value="UniProtKB-KW"/>
</dbReference>
<dbReference type="GO" id="GO:0043093">
    <property type="term" value="P:FtsZ-dependent cytokinesis"/>
    <property type="evidence" value="ECO:0007669"/>
    <property type="project" value="UniProtKB-UniRule"/>
</dbReference>
<dbReference type="Gene3D" id="1.20.5.340">
    <property type="match status" value="1"/>
</dbReference>
<dbReference type="HAMAP" id="MF_01196">
    <property type="entry name" value="ZapB"/>
    <property type="match status" value="1"/>
</dbReference>
<dbReference type="InterPro" id="IPR009252">
    <property type="entry name" value="Cell_div_ZapB"/>
</dbReference>
<dbReference type="Pfam" id="PF06005">
    <property type="entry name" value="ZapB"/>
    <property type="match status" value="1"/>
</dbReference>
<protein>
    <recommendedName>
        <fullName evidence="1">Cell division protein ZapB</fullName>
    </recommendedName>
</protein>
<evidence type="ECO:0000255" key="1">
    <source>
        <dbReference type="HAMAP-Rule" id="MF_01196"/>
    </source>
</evidence>
<feature type="chain" id="PRO_0000333944" description="Cell division protein ZapB">
    <location>
        <begin position="1"/>
        <end position="80"/>
    </location>
</feature>
<feature type="coiled-coil region" evidence="1">
    <location>
        <begin position="3"/>
        <end position="80"/>
    </location>
</feature>